<reference key="1">
    <citation type="journal article" date="1997" name="Nature">
        <title>The nucleotide sequence of Saccharomyces cerevisiae chromosome XIII.</title>
        <authorList>
            <person name="Bowman S."/>
            <person name="Churcher C.M."/>
            <person name="Badcock K."/>
            <person name="Brown D."/>
            <person name="Chillingworth T."/>
            <person name="Connor R."/>
            <person name="Dedman K."/>
            <person name="Devlin K."/>
            <person name="Gentles S."/>
            <person name="Hamlin N."/>
            <person name="Hunt S."/>
            <person name="Jagels K."/>
            <person name="Lye G."/>
            <person name="Moule S."/>
            <person name="Odell C."/>
            <person name="Pearson D."/>
            <person name="Rajandream M.A."/>
            <person name="Rice P."/>
            <person name="Skelton J."/>
            <person name="Walsh S.V."/>
            <person name="Whitehead S."/>
            <person name="Barrell B.G."/>
        </authorList>
    </citation>
    <scope>NUCLEOTIDE SEQUENCE [LARGE SCALE GENOMIC DNA]</scope>
    <source>
        <strain>ATCC 204508 / S288c</strain>
    </source>
</reference>
<reference key="2">
    <citation type="journal article" date="2014" name="G3 (Bethesda)">
        <title>The reference genome sequence of Saccharomyces cerevisiae: Then and now.</title>
        <authorList>
            <person name="Engel S.R."/>
            <person name="Dietrich F.S."/>
            <person name="Fisk D.G."/>
            <person name="Binkley G."/>
            <person name="Balakrishnan R."/>
            <person name="Costanzo M.C."/>
            <person name="Dwight S.S."/>
            <person name="Hitz B.C."/>
            <person name="Karra K."/>
            <person name="Nash R.S."/>
            <person name="Weng S."/>
            <person name="Wong E.D."/>
            <person name="Lloyd P."/>
            <person name="Skrzypek M.S."/>
            <person name="Miyasato S.R."/>
            <person name="Simison M."/>
            <person name="Cherry J.M."/>
        </authorList>
    </citation>
    <scope>GENOME REANNOTATION</scope>
    <source>
        <strain>ATCC 204508 / S288c</strain>
    </source>
</reference>
<reference key="3">
    <citation type="journal article" date="2007" name="Genome Res.">
        <title>Approaching a complete repository of sequence-verified protein-encoding clones for Saccharomyces cerevisiae.</title>
        <authorList>
            <person name="Hu Y."/>
            <person name="Rolfs A."/>
            <person name="Bhullar B."/>
            <person name="Murthy T.V.S."/>
            <person name="Zhu C."/>
            <person name="Berger M.F."/>
            <person name="Camargo A.A."/>
            <person name="Kelley F."/>
            <person name="McCarron S."/>
            <person name="Jepson D."/>
            <person name="Richardson A."/>
            <person name="Raphael J."/>
            <person name="Moreira D."/>
            <person name="Taycher E."/>
            <person name="Zuo D."/>
            <person name="Mohr S."/>
            <person name="Kane M.F."/>
            <person name="Williamson J."/>
            <person name="Simpson A.J.G."/>
            <person name="Bulyk M.L."/>
            <person name="Harlow E."/>
            <person name="Marsischky G."/>
            <person name="Kolodner R.D."/>
            <person name="LaBaer J."/>
        </authorList>
    </citation>
    <scope>NUCLEOTIDE SEQUENCE [GENOMIC DNA]</scope>
    <source>
        <strain>ATCC 204508 / S288c</strain>
    </source>
</reference>
<accession>Q04436</accession>
<accession>A0A1S0T0A3</accession>
<feature type="chain" id="PRO_0000203289" description="Uncharacterized protein YMR103C">
    <location>
        <begin position="1"/>
        <end position="120"/>
    </location>
</feature>
<protein>
    <recommendedName>
        <fullName>Uncharacterized protein YMR103C</fullName>
    </recommendedName>
</protein>
<name>YMZ3_YEAST</name>
<keyword id="KW-1185">Reference proteome</keyword>
<gene>
    <name type="ordered locus">YMR103C</name>
    <name type="ORF">YM9718.02C</name>
</gene>
<dbReference type="EMBL" id="Z49702">
    <property type="protein sequence ID" value="CAA89739.1"/>
    <property type="molecule type" value="Genomic_DNA"/>
</dbReference>
<dbReference type="EMBL" id="AY558407">
    <property type="protein sequence ID" value="AAS56733.1"/>
    <property type="molecule type" value="Genomic_DNA"/>
</dbReference>
<dbReference type="EMBL" id="BK006946">
    <property type="protein sequence ID" value="DAA80326.1"/>
    <property type="molecule type" value="Genomic_DNA"/>
</dbReference>
<dbReference type="PIR" id="S54564">
    <property type="entry name" value="S54564"/>
</dbReference>
<dbReference type="RefSeq" id="NP_001335806.1">
    <property type="nucleotide sequence ID" value="NM_001348866.1"/>
</dbReference>
<dbReference type="FunCoup" id="Q04436">
    <property type="interactions" value="58"/>
</dbReference>
<dbReference type="IntAct" id="Q04436">
    <property type="interactions" value="1"/>
</dbReference>
<dbReference type="MINT" id="Q04436"/>
<dbReference type="STRING" id="4932.YMR103C"/>
<dbReference type="PaxDb" id="4932-YMR103C"/>
<dbReference type="EnsemblFungi" id="YMR103C_mRNA">
    <property type="protein sequence ID" value="YMR103C"/>
    <property type="gene ID" value="YMR103C"/>
</dbReference>
<dbReference type="GeneID" id="855129"/>
<dbReference type="AGR" id="SGD:S000004709"/>
<dbReference type="SGD" id="S000004709">
    <property type="gene designation" value="YMR103C"/>
</dbReference>
<dbReference type="HOGENOM" id="CLU_2063311_0_0_1"/>
<dbReference type="InParanoid" id="Q04436"/>
<dbReference type="PRO" id="PR:Q04436"/>
<dbReference type="Proteomes" id="UP000002311">
    <property type="component" value="Chromosome XIII"/>
</dbReference>
<dbReference type="RNAct" id="Q04436">
    <property type="molecule type" value="protein"/>
</dbReference>
<sequence length="120" mass="13266">MVRRGCALLLATLTRLMLLIHFFYSIIRILPSTELRSKTDLLSAEGRTLIPADVKAKPAGRKSRLPEFAKRQRTLALPERKDSLFCLLPLFLHSLGREQLISSADDPGFPCAGSAMGSLT</sequence>
<organism>
    <name type="scientific">Saccharomyces cerevisiae (strain ATCC 204508 / S288c)</name>
    <name type="common">Baker's yeast</name>
    <dbReference type="NCBI Taxonomy" id="559292"/>
    <lineage>
        <taxon>Eukaryota</taxon>
        <taxon>Fungi</taxon>
        <taxon>Dikarya</taxon>
        <taxon>Ascomycota</taxon>
        <taxon>Saccharomycotina</taxon>
        <taxon>Saccharomycetes</taxon>
        <taxon>Saccharomycetales</taxon>
        <taxon>Saccharomycetaceae</taxon>
        <taxon>Saccharomyces</taxon>
    </lineage>
</organism>
<proteinExistence type="predicted"/>